<evidence type="ECO:0000255" key="1">
    <source>
        <dbReference type="HAMAP-Rule" id="MF_01006"/>
    </source>
</evidence>
<proteinExistence type="inferred from homology"/>
<name>UPPP2_PSEPF</name>
<protein>
    <recommendedName>
        <fullName evidence="1">Undecaprenyl-diphosphatase 2</fullName>
        <ecNumber evidence="1">3.6.1.27</ecNumber>
    </recommendedName>
    <alternativeName>
        <fullName evidence="1">Bacitracin resistance protein 2</fullName>
    </alternativeName>
    <alternativeName>
        <fullName evidence="1">Undecaprenyl pyrophosphate phosphatase 2</fullName>
    </alternativeName>
</protein>
<organism>
    <name type="scientific">Pseudomonas fluorescens (strain Pf0-1)</name>
    <dbReference type="NCBI Taxonomy" id="205922"/>
    <lineage>
        <taxon>Bacteria</taxon>
        <taxon>Pseudomonadati</taxon>
        <taxon>Pseudomonadota</taxon>
        <taxon>Gammaproteobacteria</taxon>
        <taxon>Pseudomonadales</taxon>
        <taxon>Pseudomonadaceae</taxon>
        <taxon>Pseudomonas</taxon>
    </lineage>
</organism>
<gene>
    <name evidence="1" type="primary">uppP2</name>
    <name type="ordered locus">Pfl01_3826</name>
</gene>
<reference key="1">
    <citation type="journal article" date="2009" name="Genome Biol.">
        <title>Genomic and genetic analyses of diversity and plant interactions of Pseudomonas fluorescens.</title>
        <authorList>
            <person name="Silby M.W."/>
            <person name="Cerdeno-Tarraga A.M."/>
            <person name="Vernikos G.S."/>
            <person name="Giddens S.R."/>
            <person name="Jackson R.W."/>
            <person name="Preston G.M."/>
            <person name="Zhang X.-X."/>
            <person name="Moon C.D."/>
            <person name="Gehrig S.M."/>
            <person name="Godfrey S.A.C."/>
            <person name="Knight C.G."/>
            <person name="Malone J.G."/>
            <person name="Robinson Z."/>
            <person name="Spiers A.J."/>
            <person name="Harris S."/>
            <person name="Challis G.L."/>
            <person name="Yaxley A.M."/>
            <person name="Harris D."/>
            <person name="Seeger K."/>
            <person name="Murphy L."/>
            <person name="Rutter S."/>
            <person name="Squares R."/>
            <person name="Quail M.A."/>
            <person name="Saunders E."/>
            <person name="Mavromatis K."/>
            <person name="Brettin T.S."/>
            <person name="Bentley S.D."/>
            <person name="Hothersall J."/>
            <person name="Stephens E."/>
            <person name="Thomas C.M."/>
            <person name="Parkhill J."/>
            <person name="Levy S.B."/>
            <person name="Rainey P.B."/>
            <person name="Thomson N.R."/>
        </authorList>
    </citation>
    <scope>NUCLEOTIDE SEQUENCE [LARGE SCALE GENOMIC DNA]</scope>
    <source>
        <strain>Pf0-1</strain>
    </source>
</reference>
<keyword id="KW-0046">Antibiotic resistance</keyword>
<keyword id="KW-0997">Cell inner membrane</keyword>
<keyword id="KW-1003">Cell membrane</keyword>
<keyword id="KW-0133">Cell shape</keyword>
<keyword id="KW-0961">Cell wall biogenesis/degradation</keyword>
<keyword id="KW-0378">Hydrolase</keyword>
<keyword id="KW-0472">Membrane</keyword>
<keyword id="KW-0573">Peptidoglycan synthesis</keyword>
<keyword id="KW-0812">Transmembrane</keyword>
<keyword id="KW-1133">Transmembrane helix</keyword>
<comment type="function">
    <text evidence="1">Catalyzes the dephosphorylation of undecaprenyl diphosphate (UPP). Confers resistance to bacitracin.</text>
</comment>
<comment type="catalytic activity">
    <reaction evidence="1">
        <text>di-trans,octa-cis-undecaprenyl diphosphate + H2O = di-trans,octa-cis-undecaprenyl phosphate + phosphate + H(+)</text>
        <dbReference type="Rhea" id="RHEA:28094"/>
        <dbReference type="ChEBI" id="CHEBI:15377"/>
        <dbReference type="ChEBI" id="CHEBI:15378"/>
        <dbReference type="ChEBI" id="CHEBI:43474"/>
        <dbReference type="ChEBI" id="CHEBI:58405"/>
        <dbReference type="ChEBI" id="CHEBI:60392"/>
        <dbReference type="EC" id="3.6.1.27"/>
    </reaction>
</comment>
<comment type="subcellular location">
    <subcellularLocation>
        <location evidence="1">Cell inner membrane</location>
        <topology evidence="1">Multi-pass membrane protein</topology>
    </subcellularLocation>
</comment>
<comment type="miscellaneous">
    <text>Bacitracin is thought to be involved in the inhibition of peptidoglycan synthesis by sequestering undecaprenyl diphosphate, thereby reducing the pool of lipid carrier available.</text>
</comment>
<comment type="similarity">
    <text evidence="1">Belongs to the UppP family.</text>
</comment>
<feature type="chain" id="PRO_0000227631" description="Undecaprenyl-diphosphatase 2">
    <location>
        <begin position="1"/>
        <end position="277"/>
    </location>
</feature>
<feature type="transmembrane region" description="Helical" evidence="1">
    <location>
        <begin position="43"/>
        <end position="63"/>
    </location>
</feature>
<feature type="transmembrane region" description="Helical" evidence="1">
    <location>
        <begin position="87"/>
        <end position="107"/>
    </location>
</feature>
<feature type="transmembrane region" description="Helical" evidence="1">
    <location>
        <begin position="109"/>
        <end position="129"/>
    </location>
</feature>
<feature type="transmembrane region" description="Helical" evidence="1">
    <location>
        <begin position="183"/>
        <end position="203"/>
    </location>
</feature>
<feature type="transmembrane region" description="Helical" evidence="1">
    <location>
        <begin position="214"/>
        <end position="234"/>
    </location>
</feature>
<feature type="transmembrane region" description="Helical" evidence="1">
    <location>
        <begin position="254"/>
        <end position="274"/>
    </location>
</feature>
<accession>Q3K9J0</accession>
<sequence length="277" mass="30394">MDLLTLFKVLILGAVEGLTEFLPISSTGHQIIVADLLEFGGERAMAFNIIIQLGAILAVVWEFRPKIFEIVKGLPTQSNAQRFTRNLLIAFFPAVILGVLFADTIHEYLFNPITVAVALVVGGIVMLWAEQRDHVVSVDHVDDMKWADALKIGCVQCLAMIPGTSRSGSTIIGGLLFGLSRKAATEFSFFLAMPTMVGAAVYSGYKYRELFQSSDLPVFALGFVVAFIFAMIAVRGLLKFIANHSYATFAWYRIAFGLLILATWQFGWVNWTAAAAA</sequence>
<dbReference type="EC" id="3.6.1.27" evidence="1"/>
<dbReference type="EMBL" id="CP000094">
    <property type="protein sequence ID" value="ABA75564.1"/>
    <property type="molecule type" value="Genomic_DNA"/>
</dbReference>
<dbReference type="RefSeq" id="WP_007951638.1">
    <property type="nucleotide sequence ID" value="NC_007492.2"/>
</dbReference>
<dbReference type="SMR" id="Q3K9J0"/>
<dbReference type="KEGG" id="pfo:Pfl01_3826"/>
<dbReference type="eggNOG" id="COG1968">
    <property type="taxonomic scope" value="Bacteria"/>
</dbReference>
<dbReference type="HOGENOM" id="CLU_060296_2_0_6"/>
<dbReference type="Proteomes" id="UP000002704">
    <property type="component" value="Chromosome"/>
</dbReference>
<dbReference type="GO" id="GO:0005886">
    <property type="term" value="C:plasma membrane"/>
    <property type="evidence" value="ECO:0007669"/>
    <property type="project" value="UniProtKB-SubCell"/>
</dbReference>
<dbReference type="GO" id="GO:0050380">
    <property type="term" value="F:undecaprenyl-diphosphatase activity"/>
    <property type="evidence" value="ECO:0007669"/>
    <property type="project" value="UniProtKB-UniRule"/>
</dbReference>
<dbReference type="GO" id="GO:0071555">
    <property type="term" value="P:cell wall organization"/>
    <property type="evidence" value="ECO:0007669"/>
    <property type="project" value="UniProtKB-KW"/>
</dbReference>
<dbReference type="GO" id="GO:0009252">
    <property type="term" value="P:peptidoglycan biosynthetic process"/>
    <property type="evidence" value="ECO:0007669"/>
    <property type="project" value="UniProtKB-KW"/>
</dbReference>
<dbReference type="GO" id="GO:0008360">
    <property type="term" value="P:regulation of cell shape"/>
    <property type="evidence" value="ECO:0007669"/>
    <property type="project" value="UniProtKB-KW"/>
</dbReference>
<dbReference type="GO" id="GO:0046677">
    <property type="term" value="P:response to antibiotic"/>
    <property type="evidence" value="ECO:0007669"/>
    <property type="project" value="UniProtKB-UniRule"/>
</dbReference>
<dbReference type="HAMAP" id="MF_01006">
    <property type="entry name" value="Undec_diphosphatase"/>
    <property type="match status" value="1"/>
</dbReference>
<dbReference type="InterPro" id="IPR003824">
    <property type="entry name" value="UppP"/>
</dbReference>
<dbReference type="NCBIfam" id="NF001389">
    <property type="entry name" value="PRK00281.1-2"/>
    <property type="match status" value="1"/>
</dbReference>
<dbReference type="NCBIfam" id="NF001390">
    <property type="entry name" value="PRK00281.1-4"/>
    <property type="match status" value="1"/>
</dbReference>
<dbReference type="NCBIfam" id="TIGR00753">
    <property type="entry name" value="undec_PP_bacA"/>
    <property type="match status" value="1"/>
</dbReference>
<dbReference type="PANTHER" id="PTHR30622">
    <property type="entry name" value="UNDECAPRENYL-DIPHOSPHATASE"/>
    <property type="match status" value="1"/>
</dbReference>
<dbReference type="PANTHER" id="PTHR30622:SF3">
    <property type="entry name" value="UNDECAPRENYL-DIPHOSPHATASE"/>
    <property type="match status" value="1"/>
</dbReference>
<dbReference type="Pfam" id="PF02673">
    <property type="entry name" value="BacA"/>
    <property type="match status" value="1"/>
</dbReference>